<keyword id="KW-0963">Cytoplasm</keyword>
<keyword id="KW-0227">DNA damage</keyword>
<keyword id="KW-0228">DNA excision</keyword>
<keyword id="KW-0234">DNA repair</keyword>
<keyword id="KW-0267">Excision nuclease</keyword>
<keyword id="KW-1185">Reference proteome</keyword>
<keyword id="KW-0742">SOS response</keyword>
<gene>
    <name evidence="1" type="primary">uvrC</name>
    <name type="ordered locus">MCA1681</name>
</gene>
<evidence type="ECO:0000255" key="1">
    <source>
        <dbReference type="HAMAP-Rule" id="MF_00203"/>
    </source>
</evidence>
<evidence type="ECO:0000305" key="2"/>
<reference key="1">
    <citation type="journal article" date="2004" name="PLoS Biol.">
        <title>Genomic insights into methanotrophy: the complete genome sequence of Methylococcus capsulatus (Bath).</title>
        <authorList>
            <person name="Ward N.L."/>
            <person name="Larsen O."/>
            <person name="Sakwa J."/>
            <person name="Bruseth L."/>
            <person name="Khouri H.M."/>
            <person name="Durkin A.S."/>
            <person name="Dimitrov G."/>
            <person name="Jiang L."/>
            <person name="Scanlan D."/>
            <person name="Kang K.H."/>
            <person name="Lewis M.R."/>
            <person name="Nelson K.E."/>
            <person name="Methe B.A."/>
            <person name="Wu M."/>
            <person name="Heidelberg J.F."/>
            <person name="Paulsen I.T."/>
            <person name="Fouts D.E."/>
            <person name="Ravel J."/>
            <person name="Tettelin H."/>
            <person name="Ren Q."/>
            <person name="Read T.D."/>
            <person name="DeBoy R.T."/>
            <person name="Seshadri R."/>
            <person name="Salzberg S.L."/>
            <person name="Jensen H.B."/>
            <person name="Birkeland N.K."/>
            <person name="Nelson W.C."/>
            <person name="Dodson R.J."/>
            <person name="Grindhaug S.H."/>
            <person name="Holt I.E."/>
            <person name="Eidhammer I."/>
            <person name="Jonasen I."/>
            <person name="Vanaken S."/>
            <person name="Utterback T.R."/>
            <person name="Feldblyum T.V."/>
            <person name="Fraser C.M."/>
            <person name="Lillehaug J.R."/>
            <person name="Eisen J.A."/>
        </authorList>
    </citation>
    <scope>NUCLEOTIDE SEQUENCE [LARGE SCALE GENOMIC DNA]</scope>
    <source>
        <strain>ATCC 33009 / NCIMB 11132 / Bath</strain>
    </source>
</reference>
<proteinExistence type="inferred from homology"/>
<name>UVRC_METCA</name>
<sequence length="610" mass="68302">MSTAPAAFDIKTFLATLTGAPGVYKMLDRNGEVIYVGKAKNLKKRVASHFAQRGSSPKQNAMVARVQAIEVTVTRTEGEALLLENQLIKRHKPRYNINLRDDKSYPYIYVSTHQEFPRLAFHRGSRARPGRFFGPFPSAAAVRDSLKTLQKIFPVRQCEDSYFVNRTRPCLQYQIERCTGPCVGLVGAETYGEDVTNTLLFLEGRGEALIDRLAQRMEQAAQRLEFEKAARYRDQISNLRTVLAKQLVAGEQGDLDMIACAIKGNIACVHVVFVRNGQQIGDRSFFPRMQDEHDAAAVLGAFIPQFYLDKEIPRELLLSHEIRELELFESVLGQQAGRPVKISWRLRGERAKRLELARANAECALTTRLASQQTIADRLRHLTEMLGLAEPPKRMECFDISHTQGDQTVASCVVFDRTGPLKSAYRRFNIEGITGGDDYAAMAQALSRRYQRIRAGEVEAPDILFIDGGKGQIHAAARTLAELGVENIRIIGIAKGPDRKPGMETLFQTGCSDPIVVKPDNPGSLLIQHIRDEAHRFAITGHRQRRAKTVTRSPLQAIAGLGPKRRQRLLRQFGGLRQISRADVEALSSVEGINRQLAQRIYDLFHDHGA</sequence>
<organism>
    <name type="scientific">Methylococcus capsulatus (strain ATCC 33009 / NCIMB 11132 / Bath)</name>
    <dbReference type="NCBI Taxonomy" id="243233"/>
    <lineage>
        <taxon>Bacteria</taxon>
        <taxon>Pseudomonadati</taxon>
        <taxon>Pseudomonadota</taxon>
        <taxon>Gammaproteobacteria</taxon>
        <taxon>Methylococcales</taxon>
        <taxon>Methylococcaceae</taxon>
        <taxon>Methylococcus</taxon>
    </lineage>
</organism>
<feature type="chain" id="PRO_0000227445" description="UvrABC system protein C">
    <location>
        <begin position="1"/>
        <end position="610"/>
    </location>
</feature>
<feature type="domain" description="GIY-YIG" evidence="1">
    <location>
        <begin position="19"/>
        <end position="97"/>
    </location>
</feature>
<feature type="domain" description="UVR" evidence="1">
    <location>
        <begin position="207"/>
        <end position="242"/>
    </location>
</feature>
<dbReference type="EMBL" id="AE017282">
    <property type="protein sequence ID" value="AAU92092.1"/>
    <property type="status" value="ALT_INIT"/>
    <property type="molecule type" value="Genomic_DNA"/>
</dbReference>
<dbReference type="RefSeq" id="WP_228370146.1">
    <property type="nucleotide sequence ID" value="NC_002977.6"/>
</dbReference>
<dbReference type="SMR" id="Q607S4"/>
<dbReference type="STRING" id="243233.MCA1681"/>
<dbReference type="GeneID" id="88223939"/>
<dbReference type="KEGG" id="mca:MCA1681"/>
<dbReference type="eggNOG" id="COG0322">
    <property type="taxonomic scope" value="Bacteria"/>
</dbReference>
<dbReference type="HOGENOM" id="CLU_014841_3_0_6"/>
<dbReference type="Proteomes" id="UP000006821">
    <property type="component" value="Chromosome"/>
</dbReference>
<dbReference type="GO" id="GO:0005737">
    <property type="term" value="C:cytoplasm"/>
    <property type="evidence" value="ECO:0007669"/>
    <property type="project" value="UniProtKB-SubCell"/>
</dbReference>
<dbReference type="GO" id="GO:0009380">
    <property type="term" value="C:excinuclease repair complex"/>
    <property type="evidence" value="ECO:0007669"/>
    <property type="project" value="InterPro"/>
</dbReference>
<dbReference type="GO" id="GO:0003677">
    <property type="term" value="F:DNA binding"/>
    <property type="evidence" value="ECO:0007669"/>
    <property type="project" value="UniProtKB-UniRule"/>
</dbReference>
<dbReference type="GO" id="GO:0009381">
    <property type="term" value="F:excinuclease ABC activity"/>
    <property type="evidence" value="ECO:0007669"/>
    <property type="project" value="UniProtKB-UniRule"/>
</dbReference>
<dbReference type="GO" id="GO:0006289">
    <property type="term" value="P:nucleotide-excision repair"/>
    <property type="evidence" value="ECO:0007669"/>
    <property type="project" value="UniProtKB-UniRule"/>
</dbReference>
<dbReference type="GO" id="GO:0009432">
    <property type="term" value="P:SOS response"/>
    <property type="evidence" value="ECO:0007669"/>
    <property type="project" value="UniProtKB-UniRule"/>
</dbReference>
<dbReference type="CDD" id="cd10434">
    <property type="entry name" value="GIY-YIG_UvrC_Cho"/>
    <property type="match status" value="1"/>
</dbReference>
<dbReference type="FunFam" id="3.30.420.340:FF:000001">
    <property type="entry name" value="UvrABC system protein C"/>
    <property type="match status" value="1"/>
</dbReference>
<dbReference type="FunFam" id="3.40.1440.10:FF:000001">
    <property type="entry name" value="UvrABC system protein C"/>
    <property type="match status" value="1"/>
</dbReference>
<dbReference type="Gene3D" id="1.10.150.20">
    <property type="entry name" value="5' to 3' exonuclease, C-terminal subdomain"/>
    <property type="match status" value="1"/>
</dbReference>
<dbReference type="Gene3D" id="3.40.1440.10">
    <property type="entry name" value="GIY-YIG endonuclease"/>
    <property type="match status" value="1"/>
</dbReference>
<dbReference type="Gene3D" id="4.10.860.10">
    <property type="entry name" value="UVR domain"/>
    <property type="match status" value="1"/>
</dbReference>
<dbReference type="Gene3D" id="3.30.420.340">
    <property type="entry name" value="UvrC, RNAse H endonuclease domain"/>
    <property type="match status" value="1"/>
</dbReference>
<dbReference type="HAMAP" id="MF_00203">
    <property type="entry name" value="UvrC"/>
    <property type="match status" value="1"/>
</dbReference>
<dbReference type="InterPro" id="IPR000305">
    <property type="entry name" value="GIY-YIG_endonuc"/>
</dbReference>
<dbReference type="InterPro" id="IPR035901">
    <property type="entry name" value="GIY-YIG_endonuc_sf"/>
</dbReference>
<dbReference type="InterPro" id="IPR047296">
    <property type="entry name" value="GIY-YIG_UvrC_Cho"/>
</dbReference>
<dbReference type="InterPro" id="IPR010994">
    <property type="entry name" value="RuvA_2-like"/>
</dbReference>
<dbReference type="InterPro" id="IPR001943">
    <property type="entry name" value="UVR_dom"/>
</dbReference>
<dbReference type="InterPro" id="IPR036876">
    <property type="entry name" value="UVR_dom_sf"/>
</dbReference>
<dbReference type="InterPro" id="IPR050066">
    <property type="entry name" value="UvrABC_protein_C"/>
</dbReference>
<dbReference type="InterPro" id="IPR004791">
    <property type="entry name" value="UvrC"/>
</dbReference>
<dbReference type="InterPro" id="IPR001162">
    <property type="entry name" value="UvrC_RNase_H_dom"/>
</dbReference>
<dbReference type="InterPro" id="IPR038476">
    <property type="entry name" value="UvrC_RNase_H_dom_sf"/>
</dbReference>
<dbReference type="NCBIfam" id="NF001824">
    <property type="entry name" value="PRK00558.1-5"/>
    <property type="match status" value="1"/>
</dbReference>
<dbReference type="NCBIfam" id="TIGR00194">
    <property type="entry name" value="uvrC"/>
    <property type="match status" value="1"/>
</dbReference>
<dbReference type="PANTHER" id="PTHR30562:SF1">
    <property type="entry name" value="UVRABC SYSTEM PROTEIN C"/>
    <property type="match status" value="1"/>
</dbReference>
<dbReference type="PANTHER" id="PTHR30562">
    <property type="entry name" value="UVRC/OXIDOREDUCTASE"/>
    <property type="match status" value="1"/>
</dbReference>
<dbReference type="Pfam" id="PF01541">
    <property type="entry name" value="GIY-YIG"/>
    <property type="match status" value="1"/>
</dbReference>
<dbReference type="Pfam" id="PF14520">
    <property type="entry name" value="HHH_5"/>
    <property type="match status" value="1"/>
</dbReference>
<dbReference type="Pfam" id="PF02151">
    <property type="entry name" value="UVR"/>
    <property type="match status" value="1"/>
</dbReference>
<dbReference type="Pfam" id="PF22920">
    <property type="entry name" value="UvrC_RNaseH"/>
    <property type="match status" value="1"/>
</dbReference>
<dbReference type="Pfam" id="PF08459">
    <property type="entry name" value="UvrC_RNaseH_dom"/>
    <property type="match status" value="1"/>
</dbReference>
<dbReference type="SMART" id="SM00465">
    <property type="entry name" value="GIYc"/>
    <property type="match status" value="1"/>
</dbReference>
<dbReference type="SUPFAM" id="SSF46600">
    <property type="entry name" value="C-terminal UvrC-binding domain of UvrB"/>
    <property type="match status" value="1"/>
</dbReference>
<dbReference type="SUPFAM" id="SSF82771">
    <property type="entry name" value="GIY-YIG endonuclease"/>
    <property type="match status" value="1"/>
</dbReference>
<dbReference type="SUPFAM" id="SSF47781">
    <property type="entry name" value="RuvA domain 2-like"/>
    <property type="match status" value="1"/>
</dbReference>
<dbReference type="PROSITE" id="PS50164">
    <property type="entry name" value="GIY_YIG"/>
    <property type="match status" value="1"/>
</dbReference>
<dbReference type="PROSITE" id="PS50151">
    <property type="entry name" value="UVR"/>
    <property type="match status" value="1"/>
</dbReference>
<dbReference type="PROSITE" id="PS50165">
    <property type="entry name" value="UVRC"/>
    <property type="match status" value="1"/>
</dbReference>
<accession>Q607S4</accession>
<protein>
    <recommendedName>
        <fullName evidence="1">UvrABC system protein C</fullName>
        <shortName evidence="1">Protein UvrC</shortName>
    </recommendedName>
    <alternativeName>
        <fullName evidence="1">Excinuclease ABC subunit C</fullName>
    </alternativeName>
</protein>
<comment type="function">
    <text evidence="1">The UvrABC repair system catalyzes the recognition and processing of DNA lesions. UvrC both incises the 5' and 3' sides of the lesion. The N-terminal half is responsible for the 3' incision and the C-terminal half is responsible for the 5' incision.</text>
</comment>
<comment type="subunit">
    <text evidence="1">Interacts with UvrB in an incision complex.</text>
</comment>
<comment type="subcellular location">
    <subcellularLocation>
        <location evidence="1">Cytoplasm</location>
    </subcellularLocation>
</comment>
<comment type="similarity">
    <text evidence="1">Belongs to the UvrC family.</text>
</comment>
<comment type="sequence caution" evidence="2">
    <conflict type="erroneous initiation">
        <sequence resource="EMBL-CDS" id="AAU92092"/>
    </conflict>
</comment>